<protein>
    <recommendedName>
        <fullName evidence="2">Iodotyrosine deiodinase</fullName>
        <ecNumber evidence="1">1.21.1.1</ecNumber>
    </recommendedName>
    <alternativeName>
        <fullName evidence="4">Halotyrosine dehalogenase</fullName>
    </alternativeName>
</protein>
<organism evidence="6">
    <name type="scientific">Thermotoga neapolitana (strain ATCC 49049 / DSM 4359 / NBRC 107923 / NS-E)</name>
    <dbReference type="NCBI Taxonomy" id="309803"/>
    <lineage>
        <taxon>Bacteria</taxon>
        <taxon>Thermotogati</taxon>
        <taxon>Thermotogota</taxon>
        <taxon>Thermotogae</taxon>
        <taxon>Thermotogales</taxon>
        <taxon>Thermotogaceae</taxon>
        <taxon>Thermotoga</taxon>
    </lineage>
</organism>
<dbReference type="EC" id="1.21.1.1" evidence="1"/>
<dbReference type="EMBL" id="CP000916">
    <property type="protein sequence ID" value="ACM22745.1"/>
    <property type="molecule type" value="Genomic_DNA"/>
</dbReference>
<dbReference type="PDB" id="6PZ0">
    <property type="method" value="X-ray"/>
    <property type="resolution" value="1.80 A"/>
    <property type="chains" value="A/B=1-186"/>
</dbReference>
<dbReference type="PDB" id="6Q1B">
    <property type="method" value="X-ray"/>
    <property type="resolution" value="1.60 A"/>
    <property type="chains" value="A/B=1-186"/>
</dbReference>
<dbReference type="PDB" id="6Q1L">
    <property type="method" value="X-ray"/>
    <property type="resolution" value="1.60 A"/>
    <property type="chains" value="A/B=1-186"/>
</dbReference>
<dbReference type="PDB" id="6TYK">
    <property type="method" value="X-ray"/>
    <property type="resolution" value="1.35 A"/>
    <property type="chains" value="A/B=1-186"/>
</dbReference>
<dbReference type="PDBsum" id="6PZ0"/>
<dbReference type="PDBsum" id="6Q1B"/>
<dbReference type="PDBsum" id="6Q1L"/>
<dbReference type="PDBsum" id="6TYK"/>
<dbReference type="SMR" id="B9K712"/>
<dbReference type="STRING" id="309803.CTN_0569"/>
<dbReference type="KEGG" id="tna:CTN_0569"/>
<dbReference type="eggNOG" id="COG0778">
    <property type="taxonomic scope" value="Bacteria"/>
</dbReference>
<dbReference type="HOGENOM" id="CLU_070764_7_2_0"/>
<dbReference type="Proteomes" id="UP000000445">
    <property type="component" value="Chromosome"/>
</dbReference>
<dbReference type="GO" id="GO:0010181">
    <property type="term" value="F:FMN binding"/>
    <property type="evidence" value="ECO:0000314"/>
    <property type="project" value="UniProtKB"/>
</dbReference>
<dbReference type="GO" id="GO:0140616">
    <property type="term" value="F:iodotyrosine deiodinase activity"/>
    <property type="evidence" value="ECO:0000314"/>
    <property type="project" value="UniProtKB"/>
</dbReference>
<dbReference type="GO" id="GO:0072545">
    <property type="term" value="F:L-tyrosine binding"/>
    <property type="evidence" value="ECO:0000314"/>
    <property type="project" value="UniProtKB"/>
</dbReference>
<dbReference type="GO" id="GO:0006570">
    <property type="term" value="P:tyrosine metabolic process"/>
    <property type="evidence" value="ECO:0000314"/>
    <property type="project" value="UniProtKB"/>
</dbReference>
<dbReference type="CDD" id="cd02144">
    <property type="entry name" value="iodotyrosine_dehalogenase"/>
    <property type="match status" value="1"/>
</dbReference>
<dbReference type="Gene3D" id="3.40.109.10">
    <property type="entry name" value="NADH Oxidase"/>
    <property type="match status" value="1"/>
</dbReference>
<dbReference type="InterPro" id="IPR029479">
    <property type="entry name" value="Nitroreductase"/>
</dbReference>
<dbReference type="InterPro" id="IPR000415">
    <property type="entry name" value="Nitroreductase-like"/>
</dbReference>
<dbReference type="InterPro" id="IPR050627">
    <property type="entry name" value="Nitroreductase/BluB"/>
</dbReference>
<dbReference type="PANTHER" id="PTHR23026:SF90">
    <property type="entry name" value="IODOTYROSINE DEIODINASE 1"/>
    <property type="match status" value="1"/>
</dbReference>
<dbReference type="PANTHER" id="PTHR23026">
    <property type="entry name" value="NADPH NITROREDUCTASE"/>
    <property type="match status" value="1"/>
</dbReference>
<dbReference type="Pfam" id="PF00881">
    <property type="entry name" value="Nitroreductase"/>
    <property type="match status" value="1"/>
</dbReference>
<dbReference type="SUPFAM" id="SSF55469">
    <property type="entry name" value="FMN-dependent nitroreductase-like"/>
    <property type="match status" value="1"/>
</dbReference>
<keyword id="KW-0002">3D-structure</keyword>
<keyword id="KW-0285">Flavoprotein</keyword>
<keyword id="KW-0288">FMN</keyword>
<keyword id="KW-0521">NADP</keyword>
<keyword id="KW-0560">Oxidoreductase</keyword>
<gene>
    <name evidence="2" type="primary">IYD</name>
    <name evidence="5" type="ordered locus">CTN_0569</name>
</gene>
<evidence type="ECO:0000269" key="1">
    <source>
    </source>
</evidence>
<evidence type="ECO:0000303" key="2">
    <source>
    </source>
</evidence>
<evidence type="ECO:0000305" key="3"/>
<evidence type="ECO:0000305" key="4">
    <source>
    </source>
</evidence>
<evidence type="ECO:0000312" key="5">
    <source>
        <dbReference type="EMBL" id="ACM22745.1"/>
    </source>
</evidence>
<evidence type="ECO:0000312" key="6">
    <source>
        <dbReference type="Proteomes" id="UP000000445"/>
    </source>
</evidence>
<evidence type="ECO:0007744" key="7">
    <source>
        <dbReference type="PDB" id="6PZ0"/>
    </source>
</evidence>
<evidence type="ECO:0007744" key="8">
    <source>
        <dbReference type="PDB" id="6Q1B"/>
    </source>
</evidence>
<evidence type="ECO:0007744" key="9">
    <source>
        <dbReference type="PDB" id="6Q1L"/>
    </source>
</evidence>
<evidence type="ECO:0007744" key="10">
    <source>
        <dbReference type="PDB" id="6TYK"/>
    </source>
</evidence>
<evidence type="ECO:0007829" key="11">
    <source>
        <dbReference type="PDB" id="6Q1B"/>
    </source>
</evidence>
<evidence type="ECO:0007829" key="12">
    <source>
        <dbReference type="PDB" id="6TYK"/>
    </source>
</evidence>
<comment type="function">
    <text evidence="1">Catalyzes the dehalogenation of halotyrosines such as 3-bromo-L-tyrosine, 3-chloro-L-tyrosine, 3-iodo-L-tyrosine and 3,5-diiodo-L-tyrosine (PubMed:34748729). Activity towards 2-iodophenol is weak (PubMed:34748729).</text>
</comment>
<comment type="catalytic activity">
    <reaction evidence="1">
        <text>2 iodide + L-tyrosine + 2 NADP(+) = 3,5-diiodo-L-tyrosine + 2 NADPH + H(+)</text>
        <dbReference type="Rhea" id="RHEA:32479"/>
        <dbReference type="ChEBI" id="CHEBI:15378"/>
        <dbReference type="ChEBI" id="CHEBI:16382"/>
        <dbReference type="ChEBI" id="CHEBI:57506"/>
        <dbReference type="ChEBI" id="CHEBI:57783"/>
        <dbReference type="ChEBI" id="CHEBI:58315"/>
        <dbReference type="ChEBI" id="CHEBI:58349"/>
        <dbReference type="EC" id="1.21.1.1"/>
    </reaction>
    <physiologicalReaction direction="right-to-left" evidence="1">
        <dbReference type="Rhea" id="RHEA:32481"/>
    </physiologicalReaction>
</comment>
<comment type="catalytic activity">
    <reaction evidence="1">
        <text>iodide + L-tyrosine + NADP(+) = 3-iodo-L-tyrosine + NADPH</text>
        <dbReference type="Rhea" id="RHEA:27453"/>
        <dbReference type="ChEBI" id="CHEBI:16382"/>
        <dbReference type="ChEBI" id="CHEBI:57783"/>
        <dbReference type="ChEBI" id="CHEBI:58315"/>
        <dbReference type="ChEBI" id="CHEBI:58349"/>
        <dbReference type="ChEBI" id="CHEBI:59898"/>
    </reaction>
    <physiologicalReaction direction="right-to-left" evidence="1">
        <dbReference type="Rhea" id="RHEA:27455"/>
    </physiologicalReaction>
</comment>
<comment type="catalytic activity">
    <reaction evidence="1">
        <text>3-iodo-L-tyrosine + iodide + NADP(+) = 3,5-diiodo-L-tyrosine + NADPH + H(+)</text>
        <dbReference type="Rhea" id="RHEA:27457"/>
        <dbReference type="ChEBI" id="CHEBI:15378"/>
        <dbReference type="ChEBI" id="CHEBI:16382"/>
        <dbReference type="ChEBI" id="CHEBI:57506"/>
        <dbReference type="ChEBI" id="CHEBI:57783"/>
        <dbReference type="ChEBI" id="CHEBI:58349"/>
        <dbReference type="ChEBI" id="CHEBI:59898"/>
    </reaction>
    <physiologicalReaction direction="right-to-left" evidence="1">
        <dbReference type="Rhea" id="RHEA:27459"/>
    </physiologicalReaction>
</comment>
<comment type="catalytic activity">
    <reaction evidence="1">
        <text>L-tyrosine + chloride + NADP(+) = 3-chloro-L-tyrosine + NADPH</text>
        <dbReference type="Rhea" id="RHEA:70343"/>
        <dbReference type="ChEBI" id="CHEBI:17996"/>
        <dbReference type="ChEBI" id="CHEBI:57783"/>
        <dbReference type="ChEBI" id="CHEBI:58315"/>
        <dbReference type="ChEBI" id="CHEBI:58349"/>
        <dbReference type="ChEBI" id="CHEBI:189422"/>
    </reaction>
    <physiologicalReaction direction="right-to-left" evidence="1">
        <dbReference type="Rhea" id="RHEA:70345"/>
    </physiologicalReaction>
</comment>
<comment type="catalytic activity">
    <reaction evidence="1">
        <text>bromide + L-tyrosine + NADP(+) = 3-bromo-L-tyrosine + NADPH</text>
        <dbReference type="Rhea" id="RHEA:70347"/>
        <dbReference type="ChEBI" id="CHEBI:15858"/>
        <dbReference type="ChEBI" id="CHEBI:57783"/>
        <dbReference type="ChEBI" id="CHEBI:58315"/>
        <dbReference type="ChEBI" id="CHEBI:58349"/>
        <dbReference type="ChEBI" id="CHEBI:189423"/>
    </reaction>
    <physiologicalReaction direction="right-to-left" evidence="1">
        <dbReference type="Rhea" id="RHEA:70349"/>
    </physiologicalReaction>
</comment>
<comment type="cofactor">
    <cofactor evidence="1">
        <name>FMN</name>
        <dbReference type="ChEBI" id="CHEBI:58210"/>
    </cofactor>
</comment>
<comment type="biophysicochemical properties">
    <kinetics>
        <KM evidence="1">0.22 uM for 3-iodo-L-tyrosine (at pH 7.4 and 25 degrees Celsius)</KM>
        <KM evidence="1">3.5 uM for 3-iodo-L-tyrosine (at pH 7.4 and 60 degrees Celsius)</KM>
        <KM evidence="1">4200 uM for 2-iodophenol (at pH 7.4 and 25 degrees Celsius)</KM>
        <KM evidence="1">0.14 uM for 3-bromo-L-tyrosine (at pH 7.4 and 60 degrees Celsius)</KM>
        <KM evidence="1">5 uM for 3-chloro-L-tyrosine (at pH 7.4 and 60 degrees Celsius)</KM>
        <KM evidence="1">6600 uM for 2-iodophenol (at pH 7.4 and 60 degrees Celsius)</KM>
        <text evidence="1">kcat is 1.6 min(-1) for the dehalogenation of 3-iodo-L-tyrosine (at pH 7.4 and 25 degrees Celsius) (PubMed:34748729). kcat is 27 min(-1) for the dehalogenation of 3-iodo-L-tyrosine (at pH 7.4 and 60 degrees Celsius) (PubMed:34748729). kcat is 0.84 min(-1) for the dehalogenation of 2-iodophenol (at pH 7.4 and 25 degrees Celsius) (PubMed:34748729). kcat is 6.5 min(-1) for the dehalogenation of 2-iodophenol (at pH 7.4 and 60 degrees Celsius) (PubMed:34748729). kcat is 5.1 min(-1) for the dehalogenation of 3-bromo-L-tyrosine (at pH 7.4 and 60 degrees Celsius) (PubMed:34748729). kcat is 2.9 min(-1) for the dehalogenation of 3-chloro-L-tyrosine (at pH 7.4 and 60 degrees Celsius) (PubMed:34748729).</text>
    </kinetics>
</comment>
<comment type="subunit">
    <text evidence="1">Homodimer.</text>
</comment>
<comment type="similarity">
    <text evidence="3">Belongs to the nitroreductase family.</text>
</comment>
<accession>B9K712</accession>
<feature type="chain" id="PRO_0000455637" description="Iodotyrosine deiodinase">
    <location>
        <begin position="1"/>
        <end position="186"/>
    </location>
</feature>
<feature type="binding site" evidence="7 8 9 10">
    <location>
        <begin position="11"/>
        <end position="15"/>
    </location>
    <ligand>
        <name>FMN</name>
        <dbReference type="ChEBI" id="CHEBI:58210"/>
    </ligand>
</feature>
<feature type="binding site" evidence="7 8 9 10">
    <location>
        <begin position="38"/>
        <end position="39"/>
    </location>
    <ligand>
        <name>FMN</name>
        <dbReference type="ChEBI" id="CHEBI:58210"/>
    </ligand>
</feature>
<feature type="binding site" evidence="7 8 9 10">
    <location>
        <position position="39"/>
    </location>
    <ligand>
        <name>FMN</name>
        <dbReference type="ChEBI" id="CHEBI:58210"/>
    </ligand>
</feature>
<feature type="binding site" evidence="1 9 10">
    <location>
        <position position="41"/>
    </location>
    <ligand>
        <name>3-iodo-L-tyrosine</name>
        <dbReference type="ChEBI" id="CHEBI:59898"/>
    </ligand>
</feature>
<feature type="binding site" evidence="1 7 10">
    <location>
        <position position="41"/>
    </location>
    <ligand>
        <name>L-tyrosine</name>
        <dbReference type="ChEBI" id="CHEBI:58315"/>
    </ligand>
</feature>
<feature type="binding site" evidence="1 9 10">
    <location>
        <position position="68"/>
    </location>
    <ligand>
        <name>3-iodo-L-tyrosine</name>
        <dbReference type="ChEBI" id="CHEBI:59898"/>
    </ligand>
</feature>
<feature type="binding site" evidence="1 7 10">
    <location>
        <position position="68"/>
    </location>
    <ligand>
        <name>L-tyrosine</name>
        <dbReference type="ChEBI" id="CHEBI:58315"/>
    </ligand>
</feature>
<feature type="binding site" evidence="1 9 10">
    <location>
        <position position="72"/>
    </location>
    <ligand>
        <name>3-iodo-L-tyrosine</name>
        <dbReference type="ChEBI" id="CHEBI:59898"/>
    </ligand>
</feature>
<feature type="binding site" evidence="1 7 10">
    <location>
        <position position="72"/>
    </location>
    <ligand>
        <name>L-tyrosine</name>
        <dbReference type="ChEBI" id="CHEBI:58315"/>
    </ligand>
</feature>
<feature type="binding site" evidence="1 9 10">
    <location>
        <position position="92"/>
    </location>
    <ligand>
        <name>3-iodo-L-tyrosine</name>
        <dbReference type="ChEBI" id="CHEBI:59898"/>
    </ligand>
</feature>
<feature type="binding site" evidence="1 7 10">
    <location>
        <position position="92"/>
    </location>
    <ligand>
        <name>L-tyrosine</name>
        <dbReference type="ChEBI" id="CHEBI:58315"/>
    </ligand>
</feature>
<feature type="binding site" evidence="7 8 9 10">
    <location>
        <position position="176"/>
    </location>
    <ligand>
        <name>FMN</name>
        <dbReference type="ChEBI" id="CHEBI:58210"/>
    </ligand>
</feature>
<feature type="mutagenesis site" description="Decreases affinity to L-Tyrosine (Tyr) and slightly reduces affinity to 3-iodo-L-tyrosine (I-Tyr)." evidence="1">
    <original>M</original>
    <variation>A</variation>
    <location>
        <position position="41"/>
    </location>
</feature>
<feature type="mutagenesis site" description="Increases affinity to Tyr and decreases affinity to I-Tyr." evidence="1">
    <original>M</original>
    <variation>F</variation>
    <location>
        <position position="41"/>
    </location>
</feature>
<feature type="mutagenesis site" description="Decreases affinity for I-Tyr and Tyr." evidence="1">
    <original>M</original>
    <variation>K</variation>
    <location>
        <position position="41"/>
    </location>
</feature>
<feature type="mutagenesis site" description="Strongly reduces affinity for Tyr by more than more than 2600-fold and reduces affinity for I-Tyr by 18-fold; when associated with A-88 and A-112." evidence="1">
    <original>W</original>
    <variation>A</variation>
    <location>
        <position position="82"/>
    </location>
</feature>
<feature type="mutagenesis site" description="Strongly reduces affinity for Tyr by more than more than 2600-fold and reduces affinity for I-Tyr by 18-fold; when associated with A-82 and A-112." evidence="1">
    <original>F</original>
    <variation>A</variation>
    <location>
        <position position="88"/>
    </location>
</feature>
<feature type="mutagenesis site" description="No effect on binding to I-Tyr and Tyr. Strongly reduces affinity for Tyr by more than more than 2600-fold and reduces affinity for I-Tyr by 18-fold; when associated with A-82 and A-88." evidence="1">
    <original>Y</original>
    <variation>A</variation>
    <location>
        <position position="112"/>
    </location>
</feature>
<feature type="helix" evidence="12">
    <location>
        <begin position="4"/>
        <end position="10"/>
    </location>
</feature>
<feature type="helix" evidence="12">
    <location>
        <begin position="24"/>
        <end position="35"/>
    </location>
</feature>
<feature type="helix" evidence="12">
    <location>
        <begin position="40"/>
        <end position="42"/>
    </location>
</feature>
<feature type="strand" evidence="12">
    <location>
        <begin position="46"/>
        <end position="51"/>
    </location>
</feature>
<feature type="helix" evidence="12">
    <location>
        <begin position="54"/>
        <end position="74"/>
    </location>
</feature>
<feature type="helix" evidence="12">
    <location>
        <begin position="77"/>
        <end position="85"/>
    </location>
</feature>
<feature type="helix" evidence="12">
    <location>
        <begin position="94"/>
        <end position="97"/>
    </location>
</feature>
<feature type="strand" evidence="12">
    <location>
        <begin position="98"/>
        <end position="107"/>
    </location>
</feature>
<feature type="helix" evidence="12">
    <location>
        <begin position="113"/>
        <end position="130"/>
    </location>
</feature>
<feature type="helix" evidence="12">
    <location>
        <begin position="143"/>
        <end position="149"/>
    </location>
</feature>
<feature type="strand" evidence="12">
    <location>
        <begin position="156"/>
        <end position="165"/>
    </location>
</feature>
<feature type="strand" evidence="11">
    <location>
        <begin position="167"/>
        <end position="169"/>
    </location>
</feature>
<feature type="strand" evidence="12">
    <location>
        <begin position="181"/>
        <end position="184"/>
    </location>
</feature>
<proteinExistence type="evidence at protein level"/>
<reference evidence="6" key="1">
    <citation type="submission" date="2007-11" db="EMBL/GenBank/DDBJ databases">
        <title>The genome sequence of the hyperthermophilic bacterium Thermotoga neapolitana.</title>
        <authorList>
            <person name="Lim S.K."/>
            <person name="Kim J.S."/>
            <person name="Cha S.H."/>
            <person name="Park B.C."/>
            <person name="Lee D.S."/>
            <person name="Tae H.S."/>
            <person name="Kim S.-J."/>
            <person name="Kim J.J."/>
            <person name="Park K.J."/>
            <person name="Lee S.Y."/>
        </authorList>
    </citation>
    <scope>NUCLEOTIDE SEQUENCE [LARGE SCALE GENOMIC DNA]</scope>
    <source>
        <strain evidence="6">ATCC 49049 / DSM 4359 / NBRC 107923 / NS-E</strain>
    </source>
</reference>
<reference evidence="8 10" key="2">
    <citation type="submission" date="2019-08" db="PDB data bank">
        <authorList>
            <person name="Sun Z."/>
            <person name="Kavran J.M."/>
            <person name="Rokita S.E."/>
        </authorList>
    </citation>
    <scope>X-RAY CRYSTALLOGRAPHY (1.60 ANGSTROMS) IN COMPLEX WITH FMN; 3-IODO-L-TYROSINE AND 3-FLUORO-L-TYROSINE</scope>
</reference>
<reference evidence="7 9" key="3">
    <citation type="journal article" date="2021" name="J. Biol. Chem.">
        <title>The minimal structure for iodotyrosine deiodinase function is defined by an outlier protein from the thermophilic bacterium Thermotoga neapolitana.</title>
        <authorList>
            <person name="Sun Z."/>
            <person name="Xu B."/>
            <person name="Spisak S."/>
            <person name="Kavran J.M."/>
            <person name="Rokita S.E."/>
        </authorList>
    </citation>
    <scope>X-RAY CRYSTALLOGRAPHY (1.60 ANGSTROMS) IN COMPLEX WITH FMN; 3-IODO-L-TYROSINE AND L-TYROSINE</scope>
    <scope>FUNCTION</scope>
    <scope>CATALYTIC ACTIVITY</scope>
    <scope>BIOPHYSICOCHEMICAL PROPERTIES</scope>
    <scope>COFACTOR</scope>
    <scope>SUBUNIT</scope>
    <scope>MUTAGENESIS OF MET-41; TRP-82; PHE-88 AND TYR-112</scope>
    <source>
        <strain evidence="2">ATCC 49049 / DSM 4359 / NBRC 107923 / NS-E</strain>
    </source>
</reference>
<name>IYD_THENN</name>
<sequence>MKMLYDLAKKRKTVRRFKKEKPPLEDLIYSLKVANEAPSGMNAQPWRFLIVEDEKLKGQIRRVCERSEKTFYENVRGRLKEWLDEKRFTWRKPFLKEAPYLLLVFSEKSAPYSRESVWLAVGYLLLALEEKGLGSVPYTPPDFREVEKLVNTPSELRLEVILPVGYPDDPKPKYPRNEVIVRYNTF</sequence>